<keyword id="KW-1003">Cell membrane</keyword>
<keyword id="KW-0472">Membrane</keyword>
<keyword id="KW-0479">Metal-binding</keyword>
<keyword id="KW-0813">Transport</keyword>
<keyword id="KW-0862">Zinc</keyword>
<accession>B9IRC2</accession>
<sequence>MSIQSIVTKETLKKKDTNIEIQEKNMNDLVESASRVIAPLWPISTFAAHHPWMGLEKQSFEQVANWLKEARNVDIYPSASMIHSAKAKGEIEESFLQIGLSRWLDSQSFHIPRETAERFCQEALKLERLPSSLLSSPELNKLAEEISYINTGSMEDSSMQPISSLIENQKGDNLSDVLNYHIIKWCKLYLDDSGSSWTMPNREKGLYRAWHHLITFDPALSKNERKVLKDWPQDAQGALTKALSELGIPESNRQAYLEGHLLSLPGWAGMIRWRSQQSIKEQALVIEYLAVRISMELAIVKPYLPLKNQKAEKKVSIVPLIASWIYWGDISTREWLQMSATEQSELLAFAYRFDENTRKKLWLEAWEQTHAEQLKKKISSKQRATNDKKRVVAQLAFCIDVRSEPFRRHLEKLGPFETFGIAGFFGLPIATTELGSNNSHPSLPVILKPKHQIKELADENEYKSYEQRKKIDSSVSYTFKTMKKNVLTSMLLPEVSGPLLGLQMITRSFVPRRVGGFIRNLRKNMLQKPNTTFSLNHVHDTKCEIPIGFTKEEKVNYVRQALKMVGLTEKFAPLVVMCGHSSQSTNNPYAAALECGACGGAAGGFNARVFATLCNLPEVREALSAEGIKIPEDTIFAAAEHKTTVDELEWIYVPELSEAAQEAFDNIESVMPNVSQHANRERLTQLPNFKMKIKNPSKEAHRFAEDWSEIRPEWGLARNASFIIGQRELTQDCDLEGRAFLHNYDWKQDENGDILASIIAGPGTVAQWINLQYYASTVAPHYYGSGNKTTQTVTAGLGVMQGNASDLLSGLPWQSVMQSDSETYHSPLRLLIVIQAPTKYIERLLNNDFTFREKVQNGWVRLASVDSEGRWKNW</sequence>
<comment type="function">
    <text evidence="1">Part of an energy-coupled inorganic carbon pump.</text>
</comment>
<comment type="cofactor">
    <cofactor evidence="1">
        <name>Zn(2+)</name>
        <dbReference type="ChEBI" id="CHEBI:29105"/>
    </cofactor>
</comment>
<comment type="subunit">
    <text evidence="1">Forms a complex with DabB.</text>
</comment>
<comment type="subcellular location">
    <subcellularLocation>
        <location evidence="1">Cell membrane</location>
        <topology evidence="1">Peripheral membrane protein</topology>
    </subcellularLocation>
</comment>
<comment type="similarity">
    <text evidence="1">Belongs to the inorganic carbon transporter (TC 9.A.2) DabA family.</text>
</comment>
<feature type="chain" id="PRO_0000387244" description="Probable inorganic carbon transporter subunit DabA">
    <location>
        <begin position="1"/>
        <end position="874"/>
    </location>
</feature>
<feature type="binding site" evidence="1">
    <location>
        <position position="398"/>
    </location>
    <ligand>
        <name>Zn(2+)</name>
        <dbReference type="ChEBI" id="CHEBI:29105"/>
    </ligand>
</feature>
<feature type="binding site" evidence="1">
    <location>
        <position position="400"/>
    </location>
    <ligand>
        <name>Zn(2+)</name>
        <dbReference type="ChEBI" id="CHEBI:29105"/>
    </ligand>
</feature>
<feature type="binding site" evidence="1">
    <location>
        <position position="580"/>
    </location>
    <ligand>
        <name>Zn(2+)</name>
        <dbReference type="ChEBI" id="CHEBI:29105"/>
    </ligand>
</feature>
<feature type="binding site" evidence="1">
    <location>
        <position position="595"/>
    </location>
    <ligand>
        <name>Zn(2+)</name>
        <dbReference type="ChEBI" id="CHEBI:29105"/>
    </ligand>
</feature>
<proteinExistence type="inferred from homology"/>
<evidence type="ECO:0000255" key="1">
    <source>
        <dbReference type="HAMAP-Rule" id="MF_01871"/>
    </source>
</evidence>
<organism>
    <name type="scientific">Bacillus cereus (strain Q1)</name>
    <dbReference type="NCBI Taxonomy" id="361100"/>
    <lineage>
        <taxon>Bacteria</taxon>
        <taxon>Bacillati</taxon>
        <taxon>Bacillota</taxon>
        <taxon>Bacilli</taxon>
        <taxon>Bacillales</taxon>
        <taxon>Bacillaceae</taxon>
        <taxon>Bacillus</taxon>
        <taxon>Bacillus cereus group</taxon>
    </lineage>
</organism>
<protein>
    <recommendedName>
        <fullName evidence="1">Probable inorganic carbon transporter subunit DabA</fullName>
    </recommendedName>
</protein>
<gene>
    <name evidence="1" type="primary">dabA</name>
    <name type="ordered locus">BCQ_2979</name>
</gene>
<name>DABA_BACCQ</name>
<dbReference type="EMBL" id="CP000227">
    <property type="protein sequence ID" value="ACM13407.1"/>
    <property type="molecule type" value="Genomic_DNA"/>
</dbReference>
<dbReference type="SMR" id="B9IRC2"/>
<dbReference type="KEGG" id="bcq:BCQ_2979"/>
<dbReference type="HOGENOM" id="CLU_009885_0_0_9"/>
<dbReference type="Proteomes" id="UP000000441">
    <property type="component" value="Chromosome"/>
</dbReference>
<dbReference type="GO" id="GO:0005886">
    <property type="term" value="C:plasma membrane"/>
    <property type="evidence" value="ECO:0007669"/>
    <property type="project" value="UniProtKB-SubCell"/>
</dbReference>
<dbReference type="GO" id="GO:0008270">
    <property type="term" value="F:zinc ion binding"/>
    <property type="evidence" value="ECO:0007669"/>
    <property type="project" value="UniProtKB-UniRule"/>
</dbReference>
<dbReference type="HAMAP" id="MF_01871">
    <property type="entry name" value="DabA"/>
    <property type="match status" value="1"/>
</dbReference>
<dbReference type="InterPro" id="IPR018752">
    <property type="entry name" value="DabA"/>
</dbReference>
<dbReference type="PANTHER" id="PTHR38344:SF1">
    <property type="entry name" value="INORGANIC CARBON TRANSPORTER SUBUNIT DABA-RELATED"/>
    <property type="match status" value="1"/>
</dbReference>
<dbReference type="PANTHER" id="PTHR38344">
    <property type="entry name" value="UPF0753 PROTEIN AQ_863"/>
    <property type="match status" value="1"/>
</dbReference>
<dbReference type="Pfam" id="PF10070">
    <property type="entry name" value="DabA"/>
    <property type="match status" value="1"/>
</dbReference>
<reference key="1">
    <citation type="journal article" date="2009" name="J. Bacteriol.">
        <title>Complete genome sequence of the extremophilic Bacillus cereus strain Q1 with industrial applications.</title>
        <authorList>
            <person name="Xiong Z."/>
            <person name="Jiang Y."/>
            <person name="Qi D."/>
            <person name="Lu H."/>
            <person name="Yang F."/>
            <person name="Yang J."/>
            <person name="Chen L."/>
            <person name="Sun L."/>
            <person name="Xu X."/>
            <person name="Xue Y."/>
            <person name="Zhu Y."/>
            <person name="Jin Q."/>
        </authorList>
    </citation>
    <scope>NUCLEOTIDE SEQUENCE [LARGE SCALE GENOMIC DNA]</scope>
    <source>
        <strain>Q1</strain>
    </source>
</reference>